<dbReference type="EMBL" id="M55219">
    <property type="protein sequence ID" value="AAA37870.1"/>
    <property type="molecule type" value="mRNA"/>
</dbReference>
<dbReference type="PIR" id="A39582">
    <property type="entry name" value="A39582"/>
</dbReference>
<dbReference type="FunCoup" id="Q99388">
    <property type="interactions" value="206"/>
</dbReference>
<dbReference type="ProteomicsDB" id="285331"/>
<dbReference type="AGR" id="MGI:1891441"/>
<dbReference type="MGI" id="MGI:1891441">
    <property type="gene designation" value="Csprs"/>
</dbReference>
<dbReference type="eggNOG" id="KOG2177">
    <property type="taxonomic scope" value="Eukaryota"/>
</dbReference>
<dbReference type="InParanoid" id="Q99388"/>
<dbReference type="PhylomeDB" id="Q99388"/>
<dbReference type="PRO" id="PR:Q99388"/>
<dbReference type="Proteomes" id="UP000000589">
    <property type="component" value="Unplaced"/>
</dbReference>
<dbReference type="RNAct" id="Q99388">
    <property type="molecule type" value="protein"/>
</dbReference>
<dbReference type="GO" id="GO:0005634">
    <property type="term" value="C:nucleus"/>
    <property type="evidence" value="ECO:0007669"/>
    <property type="project" value="InterPro"/>
</dbReference>
<dbReference type="InterPro" id="IPR004865">
    <property type="entry name" value="HSR_dom"/>
</dbReference>
<dbReference type="InterPro" id="IPR043563">
    <property type="entry name" value="Sp110/Sp140/Sp140L-like"/>
</dbReference>
<dbReference type="PANTHER" id="PTHR46386">
    <property type="entry name" value="NUCLEAR BODY PROTEIN SP140"/>
    <property type="match status" value="1"/>
</dbReference>
<dbReference type="PANTHER" id="PTHR46386:SF1">
    <property type="entry name" value="NUCLEAR BODY PROTEIN SP140-LIKE PROTEIN"/>
    <property type="match status" value="1"/>
</dbReference>
<dbReference type="Pfam" id="PF03172">
    <property type="entry name" value="HSR"/>
    <property type="match status" value="1"/>
</dbReference>
<dbReference type="PROSITE" id="PS51414">
    <property type="entry name" value="HSR"/>
    <property type="match status" value="1"/>
</dbReference>
<proteinExistence type="evidence at transcript level"/>
<evidence type="ECO:0000255" key="1">
    <source>
        <dbReference type="PROSITE-ProRule" id="PRU00747"/>
    </source>
</evidence>
<protein>
    <recommendedName>
        <fullName>Component of Sp100-rs</fullName>
    </recommendedName>
</protein>
<organism>
    <name type="scientific">Mus musculus</name>
    <name type="common">Mouse</name>
    <dbReference type="NCBI Taxonomy" id="10090"/>
    <lineage>
        <taxon>Eukaryota</taxon>
        <taxon>Metazoa</taxon>
        <taxon>Chordata</taxon>
        <taxon>Craniata</taxon>
        <taxon>Vertebrata</taxon>
        <taxon>Euteleostomi</taxon>
        <taxon>Mammalia</taxon>
        <taxon>Eutheria</taxon>
        <taxon>Euarchontoglires</taxon>
        <taxon>Glires</taxon>
        <taxon>Rodentia</taxon>
        <taxon>Myomorpha</taxon>
        <taxon>Muroidea</taxon>
        <taxon>Muridae</taxon>
        <taxon>Murinae</taxon>
        <taxon>Mus</taxon>
        <taxon>Mus</taxon>
    </lineage>
</organism>
<keyword id="KW-1185">Reference proteome</keyword>
<reference key="1">
    <citation type="journal article" date="1991" name="Mol. Cell. Biol.">
        <title>Transcripts from amplified sequences of an inherited homogeneously staining region in chromosome 1 of the house mouse (Mus musculus).</title>
        <authorList>
            <person name="Eckert W.A."/>
            <person name="Plass C."/>
            <person name="Weith A."/>
            <person name="Traut W."/>
            <person name="Winking H."/>
        </authorList>
    </citation>
    <scope>NUCLEOTIDE SEQUENCE [MRNA]</scope>
    <source>
        <tissue>Liver</tissue>
    </source>
</reference>
<accession>Q99388</accession>
<feature type="chain" id="PRO_0000074102" description="Component of Sp100-rs">
    <location>
        <begin position="1"/>
        <end position="208"/>
    </location>
</feature>
<feature type="domain" description="HSR" evidence="1">
    <location>
        <begin position="6"/>
        <end position="121"/>
    </location>
</feature>
<gene>
    <name type="primary">Csprs</name>
    <name type="synonym">D1Lub1</name>
</gene>
<name>CSPRS_MOUSE</name>
<sequence length="208" mass="24061">MEGSNGSPRMSTEQENTEMHLIECMLKHFKIQKVAISNAIRSTFPFLESLRDREFITGKMYEDLLDSCRSLVPVDKVIYRALEELEKKFDMTVLCKLFNEVNMEKYPDLNLLRRSFECGAKPALKTMNSSSEHCNISDWLRLEATLKASVYMVAFSITTSLTIVIIAIVSQSLQLRKECFNPFVYGLHNRDLQSKLYPWLCCQKKLLP</sequence>